<reference key="1">
    <citation type="submission" date="2007-06" db="EMBL/GenBank/DDBJ databases">
        <authorList>
            <person name="Brinkac L.M."/>
            <person name="Daugherty S."/>
            <person name="Dodson R.J."/>
            <person name="Madupu R."/>
            <person name="Brown J.L."/>
            <person name="Bruce D."/>
            <person name="Detter C."/>
            <person name="Munk C."/>
            <person name="Smith L.A."/>
            <person name="Smith T.J."/>
            <person name="White O."/>
            <person name="Brettin T.S."/>
        </authorList>
    </citation>
    <scope>NUCLEOTIDE SEQUENCE [LARGE SCALE GENOMIC DNA]</scope>
    <source>
        <strain>Langeland / NCTC 10281 / Type F</strain>
    </source>
</reference>
<accession>A7G9Q4</accession>
<dbReference type="EMBL" id="CP000728">
    <property type="protein sequence ID" value="ABS39463.1"/>
    <property type="molecule type" value="Genomic_DNA"/>
</dbReference>
<dbReference type="RefSeq" id="WP_003356112.1">
    <property type="nucleotide sequence ID" value="NC_009699.1"/>
</dbReference>
<dbReference type="SMR" id="A7G9Q4"/>
<dbReference type="GeneID" id="92936949"/>
<dbReference type="KEGG" id="cbf:CLI_0206"/>
<dbReference type="HOGENOM" id="CLU_148047_2_0_9"/>
<dbReference type="Proteomes" id="UP000002410">
    <property type="component" value="Chromosome"/>
</dbReference>
<dbReference type="GO" id="GO:0005886">
    <property type="term" value="C:plasma membrane"/>
    <property type="evidence" value="ECO:0007669"/>
    <property type="project" value="UniProtKB-SubCell"/>
</dbReference>
<dbReference type="GO" id="GO:0045259">
    <property type="term" value="C:proton-transporting ATP synthase complex"/>
    <property type="evidence" value="ECO:0007669"/>
    <property type="project" value="UniProtKB-KW"/>
</dbReference>
<dbReference type="GO" id="GO:0033177">
    <property type="term" value="C:proton-transporting two-sector ATPase complex, proton-transporting domain"/>
    <property type="evidence" value="ECO:0007669"/>
    <property type="project" value="InterPro"/>
</dbReference>
<dbReference type="GO" id="GO:0008289">
    <property type="term" value="F:lipid binding"/>
    <property type="evidence" value="ECO:0007669"/>
    <property type="project" value="UniProtKB-KW"/>
</dbReference>
<dbReference type="GO" id="GO:0046933">
    <property type="term" value="F:proton-transporting ATP synthase activity, rotational mechanism"/>
    <property type="evidence" value="ECO:0007669"/>
    <property type="project" value="UniProtKB-UniRule"/>
</dbReference>
<dbReference type="CDD" id="cd18184">
    <property type="entry name" value="ATP-synt_Fo_c_NaATPase"/>
    <property type="match status" value="1"/>
</dbReference>
<dbReference type="FunFam" id="1.20.20.10:FF:000001">
    <property type="entry name" value="ATP synthase subunit c, chloroplastic"/>
    <property type="match status" value="1"/>
</dbReference>
<dbReference type="Gene3D" id="1.20.20.10">
    <property type="entry name" value="F1F0 ATP synthase subunit C"/>
    <property type="match status" value="1"/>
</dbReference>
<dbReference type="HAMAP" id="MF_01396">
    <property type="entry name" value="ATP_synth_c_bact"/>
    <property type="match status" value="1"/>
</dbReference>
<dbReference type="InterPro" id="IPR005953">
    <property type="entry name" value="ATP_synth_csu_bac/chlpt"/>
</dbReference>
<dbReference type="InterPro" id="IPR000454">
    <property type="entry name" value="ATP_synth_F0_csu"/>
</dbReference>
<dbReference type="InterPro" id="IPR020537">
    <property type="entry name" value="ATP_synth_F0_csu_DDCD_BS"/>
</dbReference>
<dbReference type="InterPro" id="IPR038662">
    <property type="entry name" value="ATP_synth_F0_csu_sf"/>
</dbReference>
<dbReference type="InterPro" id="IPR002379">
    <property type="entry name" value="ATPase_proteolipid_c-like_dom"/>
</dbReference>
<dbReference type="InterPro" id="IPR035921">
    <property type="entry name" value="F/V-ATP_Csub_sf"/>
</dbReference>
<dbReference type="NCBIfam" id="TIGR01260">
    <property type="entry name" value="ATP_synt_c"/>
    <property type="match status" value="1"/>
</dbReference>
<dbReference type="PANTHER" id="PTHR10031">
    <property type="entry name" value="ATP SYNTHASE LIPID-BINDING PROTEIN, MITOCHONDRIAL"/>
    <property type="match status" value="1"/>
</dbReference>
<dbReference type="PANTHER" id="PTHR10031:SF0">
    <property type="entry name" value="ATPASE PROTEIN 9"/>
    <property type="match status" value="1"/>
</dbReference>
<dbReference type="Pfam" id="PF00137">
    <property type="entry name" value="ATP-synt_C"/>
    <property type="match status" value="1"/>
</dbReference>
<dbReference type="PRINTS" id="PR00124">
    <property type="entry name" value="ATPASEC"/>
</dbReference>
<dbReference type="SUPFAM" id="SSF81333">
    <property type="entry name" value="F1F0 ATP synthase subunit C"/>
    <property type="match status" value="1"/>
</dbReference>
<dbReference type="PROSITE" id="PS00605">
    <property type="entry name" value="ATPASE_C"/>
    <property type="match status" value="1"/>
</dbReference>
<proteinExistence type="inferred from homology"/>
<organism>
    <name type="scientific">Clostridium botulinum (strain Langeland / NCTC 10281 / Type F)</name>
    <dbReference type="NCBI Taxonomy" id="441772"/>
    <lineage>
        <taxon>Bacteria</taxon>
        <taxon>Bacillati</taxon>
        <taxon>Bacillota</taxon>
        <taxon>Clostridia</taxon>
        <taxon>Eubacteriales</taxon>
        <taxon>Clostridiaceae</taxon>
        <taxon>Clostridium</taxon>
    </lineage>
</organism>
<feature type="chain" id="PRO_0000365868" description="ATP synthase subunit c">
    <location>
        <begin position="1"/>
        <end position="79"/>
    </location>
</feature>
<feature type="transmembrane region" description="Helical" evidence="1">
    <location>
        <begin position="7"/>
        <end position="27"/>
    </location>
</feature>
<feature type="transmembrane region" description="Helical" evidence="1">
    <location>
        <begin position="56"/>
        <end position="76"/>
    </location>
</feature>
<feature type="site" description="Reversibly protonated during proton transport" evidence="1">
    <location>
        <position position="62"/>
    </location>
</feature>
<evidence type="ECO:0000255" key="1">
    <source>
        <dbReference type="HAMAP-Rule" id="MF_01396"/>
    </source>
</evidence>
<name>ATPL_CLOBL</name>
<protein>
    <recommendedName>
        <fullName evidence="1">ATP synthase subunit c</fullName>
    </recommendedName>
    <alternativeName>
        <fullName evidence="1">ATP synthase F(0) sector subunit c</fullName>
    </alternativeName>
    <alternativeName>
        <fullName evidence="1">F-type ATPase subunit c</fullName>
        <shortName evidence="1">F-ATPase subunit c</shortName>
    </alternativeName>
    <alternativeName>
        <fullName evidence="1">Lipid-binding protein</fullName>
    </alternativeName>
</protein>
<keyword id="KW-0066">ATP synthesis</keyword>
<keyword id="KW-1003">Cell membrane</keyword>
<keyword id="KW-0138">CF(0)</keyword>
<keyword id="KW-0375">Hydrogen ion transport</keyword>
<keyword id="KW-0406">Ion transport</keyword>
<keyword id="KW-0446">Lipid-binding</keyword>
<keyword id="KW-0472">Membrane</keyword>
<keyword id="KW-0812">Transmembrane</keyword>
<keyword id="KW-1133">Transmembrane helix</keyword>
<keyword id="KW-0813">Transport</keyword>
<sequence length="79" mass="7759">MDPKAFVSGMAALGAGIAALACIGAGIGTGNATGKAVEGVSRQPEASGKIMSTLVIGSAFSEATAIYGLIIALFLIFKI</sequence>
<comment type="function">
    <text evidence="1">F(1)F(0) ATP synthase produces ATP from ADP in the presence of a proton or sodium gradient. F-type ATPases consist of two structural domains, F(1) containing the extramembraneous catalytic core and F(0) containing the membrane proton channel, linked together by a central stalk and a peripheral stalk. During catalysis, ATP synthesis in the catalytic domain of F(1) is coupled via a rotary mechanism of the central stalk subunits to proton translocation.</text>
</comment>
<comment type="function">
    <text evidence="1">Key component of the F(0) channel; it plays a direct role in translocation across the membrane. A homomeric c-ring of between 10-14 subunits forms the central stalk rotor element with the F(1) delta and epsilon subunits.</text>
</comment>
<comment type="subunit">
    <text evidence="1">F-type ATPases have 2 components, F(1) - the catalytic core - and F(0) - the membrane proton channel. F(1) has five subunits: alpha(3), beta(3), gamma(1), delta(1), epsilon(1). F(0) has three main subunits: a(1), b(2) and c(10-14). The alpha and beta chains form an alternating ring which encloses part of the gamma chain. F(1) is attached to F(0) by a central stalk formed by the gamma and epsilon chains, while a peripheral stalk is formed by the delta and b chains.</text>
</comment>
<comment type="subcellular location">
    <subcellularLocation>
        <location evidence="1">Cell membrane</location>
        <topology evidence="1">Multi-pass membrane protein</topology>
    </subcellularLocation>
</comment>
<comment type="similarity">
    <text evidence="1">Belongs to the ATPase C chain family.</text>
</comment>
<gene>
    <name evidence="1" type="primary">atpE</name>
    <name type="ordered locus">CLI_0206</name>
</gene>